<keyword id="KW-0027">Amidation</keyword>
<keyword id="KW-0108">Calcium channel impairing toxin</keyword>
<keyword id="KW-0903">Direct protein sequencing</keyword>
<keyword id="KW-1015">Disulfide bond</keyword>
<keyword id="KW-0872">Ion channel impairing toxin</keyword>
<keyword id="KW-0960">Knottin</keyword>
<keyword id="KW-0528">Neurotoxin</keyword>
<keyword id="KW-0638">Presynaptic neurotoxin</keyword>
<keyword id="KW-0964">Secreted</keyword>
<keyword id="KW-0800">Toxin</keyword>
<keyword id="KW-1218">Voltage-gated calcium channel impairing toxin</keyword>
<comment type="function">
    <text evidence="2">Omega-conotoxins act at presynaptic membranes, they bind and block voltage-gated calcium channels (Cav). This toxin blocks N-, P- and Q-type calcium channels.</text>
</comment>
<comment type="subcellular location">
    <subcellularLocation>
        <location>Secreted</location>
    </subcellularLocation>
</comment>
<comment type="tissue specificity">
    <text>Expressed by the venom duct.</text>
</comment>
<comment type="domain">
    <text evidence="1">The presence of a 'disulfide through disulfide knot' structurally defines this protein as a knottin.</text>
</comment>
<comment type="domain">
    <text>The cysteine framework is VI/VII (C-C-CC-C-C).</text>
</comment>
<comment type="similarity">
    <text evidence="3">Belongs to the conotoxin O1 superfamily.</text>
</comment>
<reference key="1">
    <citation type="journal article" date="2000" name="J. Biol. Chem.">
        <title>Novel omega-conotoxins from Conus catus discriminate among neuronal calcium channel subtypes.</title>
        <authorList>
            <person name="Lewis R.J."/>
            <person name="Nielsen K.J."/>
            <person name="Craik D.J."/>
            <person name="Loughnan M.L."/>
            <person name="Adams D.A."/>
            <person name="Sharpe I.A."/>
            <person name="Luchian T."/>
            <person name="Adams D.J."/>
            <person name="Bond T."/>
            <person name="Thomas L."/>
            <person name="Jones A."/>
            <person name="Matheson J.-L."/>
            <person name="Drinkwater R."/>
            <person name="Andrews P.R."/>
            <person name="Alewood P.F."/>
        </authorList>
    </citation>
    <scope>PROTEIN SEQUENCE</scope>
    <scope>AMIDATION AT CYS-26</scope>
    <scope>SYNTHESIS</scope>
    <scope>FUNCTION</scope>
    <source>
        <tissue>Venom</tissue>
    </source>
</reference>
<protein>
    <recommendedName>
        <fullName>Omega-conotoxin CVIC</fullName>
    </recommendedName>
</protein>
<feature type="peptide" id="PRO_0000044483" description="Omega-conotoxin CVIC">
    <location>
        <begin position="1"/>
        <end position="26"/>
    </location>
</feature>
<feature type="modified residue" description="Cysteine amide" evidence="2">
    <location>
        <position position="26"/>
    </location>
</feature>
<feature type="disulfide bond" evidence="1">
    <location>
        <begin position="1"/>
        <end position="16"/>
    </location>
</feature>
<feature type="disulfide bond" evidence="1">
    <location>
        <begin position="8"/>
        <end position="20"/>
    </location>
</feature>
<feature type="disulfide bond" evidence="1">
    <location>
        <begin position="15"/>
        <end position="26"/>
    </location>
</feature>
<accession>P58919</accession>
<proteinExistence type="evidence at protein level"/>
<name>O16C_CONCT</name>
<organism>
    <name type="scientific">Conus catus</name>
    <name type="common">Cat cone</name>
    <dbReference type="NCBI Taxonomy" id="101291"/>
    <lineage>
        <taxon>Eukaryota</taxon>
        <taxon>Metazoa</taxon>
        <taxon>Spiralia</taxon>
        <taxon>Lophotrochozoa</taxon>
        <taxon>Mollusca</taxon>
        <taxon>Gastropoda</taxon>
        <taxon>Caenogastropoda</taxon>
        <taxon>Neogastropoda</taxon>
        <taxon>Conoidea</taxon>
        <taxon>Conidae</taxon>
        <taxon>Conus</taxon>
        <taxon>Pionoconus</taxon>
    </lineage>
</organism>
<dbReference type="SMR" id="P58919"/>
<dbReference type="ConoServer" id="1725">
    <property type="toxin name" value="CVIC"/>
</dbReference>
<dbReference type="GO" id="GO:0005576">
    <property type="term" value="C:extracellular region"/>
    <property type="evidence" value="ECO:0007669"/>
    <property type="project" value="UniProtKB-SubCell"/>
</dbReference>
<dbReference type="GO" id="GO:0044231">
    <property type="term" value="C:host cell presynaptic membrane"/>
    <property type="evidence" value="ECO:0007669"/>
    <property type="project" value="UniProtKB-KW"/>
</dbReference>
<dbReference type="GO" id="GO:0005246">
    <property type="term" value="F:calcium channel regulator activity"/>
    <property type="evidence" value="ECO:0007669"/>
    <property type="project" value="UniProtKB-KW"/>
</dbReference>
<dbReference type="GO" id="GO:0008200">
    <property type="term" value="F:ion channel inhibitor activity"/>
    <property type="evidence" value="ECO:0007669"/>
    <property type="project" value="InterPro"/>
</dbReference>
<dbReference type="GO" id="GO:0090729">
    <property type="term" value="F:toxin activity"/>
    <property type="evidence" value="ECO:0007669"/>
    <property type="project" value="UniProtKB-KW"/>
</dbReference>
<dbReference type="InterPro" id="IPR012321">
    <property type="entry name" value="Conotoxin_omega-typ_CS"/>
</dbReference>
<dbReference type="SUPFAM" id="SSF57059">
    <property type="entry name" value="omega toxin-like"/>
    <property type="match status" value="1"/>
</dbReference>
<dbReference type="PROSITE" id="PS60004">
    <property type="entry name" value="OMEGA_CONOTOXIN"/>
    <property type="match status" value="1"/>
</dbReference>
<evidence type="ECO:0000250" key="1"/>
<evidence type="ECO:0000269" key="2">
    <source>
    </source>
</evidence>
<evidence type="ECO:0000305" key="3"/>
<sequence length="26" mass="2790">CKGKGQSCSKLMYDCCTGSCSRRGKC</sequence>